<dbReference type="EMBL" id="AE008923">
    <property type="protein sequence ID" value="AAM37180.1"/>
    <property type="molecule type" value="Genomic_DNA"/>
</dbReference>
<dbReference type="SMR" id="Q8PK49"/>
<dbReference type="KEGG" id="xac:XAC2327"/>
<dbReference type="eggNOG" id="COG2332">
    <property type="taxonomic scope" value="Bacteria"/>
</dbReference>
<dbReference type="HOGENOM" id="CLU_079503_1_1_6"/>
<dbReference type="Proteomes" id="UP000000576">
    <property type="component" value="Chromosome"/>
</dbReference>
<dbReference type="GO" id="GO:0005886">
    <property type="term" value="C:plasma membrane"/>
    <property type="evidence" value="ECO:0007669"/>
    <property type="project" value="UniProtKB-SubCell"/>
</dbReference>
<dbReference type="GO" id="GO:0020037">
    <property type="term" value="F:heme binding"/>
    <property type="evidence" value="ECO:0007669"/>
    <property type="project" value="InterPro"/>
</dbReference>
<dbReference type="GO" id="GO:0046872">
    <property type="term" value="F:metal ion binding"/>
    <property type="evidence" value="ECO:0007669"/>
    <property type="project" value="UniProtKB-KW"/>
</dbReference>
<dbReference type="GO" id="GO:0017004">
    <property type="term" value="P:cytochrome complex assembly"/>
    <property type="evidence" value="ECO:0007669"/>
    <property type="project" value="UniProtKB-KW"/>
</dbReference>
<dbReference type="FunFam" id="2.40.50.140:FF:000104">
    <property type="entry name" value="Cytochrome c-type biogenesis protein CcmE"/>
    <property type="match status" value="1"/>
</dbReference>
<dbReference type="Gene3D" id="2.40.50.140">
    <property type="entry name" value="Nucleic acid-binding proteins"/>
    <property type="match status" value="1"/>
</dbReference>
<dbReference type="HAMAP" id="MF_01959">
    <property type="entry name" value="CcmE"/>
    <property type="match status" value="1"/>
</dbReference>
<dbReference type="InterPro" id="IPR004329">
    <property type="entry name" value="CcmE"/>
</dbReference>
<dbReference type="InterPro" id="IPR036127">
    <property type="entry name" value="CcmE-like_sf"/>
</dbReference>
<dbReference type="InterPro" id="IPR012340">
    <property type="entry name" value="NA-bd_OB-fold"/>
</dbReference>
<dbReference type="NCBIfam" id="NF009727">
    <property type="entry name" value="PRK13254.1-1"/>
    <property type="match status" value="1"/>
</dbReference>
<dbReference type="NCBIfam" id="NF009728">
    <property type="entry name" value="PRK13254.1-2"/>
    <property type="match status" value="1"/>
</dbReference>
<dbReference type="NCBIfam" id="NF009729">
    <property type="entry name" value="PRK13254.1-3"/>
    <property type="match status" value="1"/>
</dbReference>
<dbReference type="NCBIfam" id="NF009731">
    <property type="entry name" value="PRK13254.1-5"/>
    <property type="match status" value="1"/>
</dbReference>
<dbReference type="PANTHER" id="PTHR34128">
    <property type="entry name" value="CYTOCHROME C-TYPE BIOGENESIS PROTEIN CCME HOMOLOG, MITOCHONDRIAL"/>
    <property type="match status" value="1"/>
</dbReference>
<dbReference type="PANTHER" id="PTHR34128:SF2">
    <property type="entry name" value="CYTOCHROME C-TYPE BIOGENESIS PROTEIN CCME HOMOLOG, MITOCHONDRIAL"/>
    <property type="match status" value="1"/>
</dbReference>
<dbReference type="Pfam" id="PF03100">
    <property type="entry name" value="CcmE"/>
    <property type="match status" value="1"/>
</dbReference>
<dbReference type="SUPFAM" id="SSF82093">
    <property type="entry name" value="Heme chaperone CcmE"/>
    <property type="match status" value="1"/>
</dbReference>
<sequence>MNPQRRRRLWLVLALVLAGGLATTLVAMALQRNVAYLYTPSEVLRGDAGAHSRFRLGGMVEKGSFKRASGSLEAQFRVTDGDAQLSVSYDRILPDLFREGQAVVATGRMQHGIFVAEDVLAKHDETYMPKEVADKMGSAHRKHDVPAAAGQVGERQ</sequence>
<keyword id="KW-0997">Cell inner membrane</keyword>
<keyword id="KW-1003">Cell membrane</keyword>
<keyword id="KW-0201">Cytochrome c-type biogenesis</keyword>
<keyword id="KW-0349">Heme</keyword>
<keyword id="KW-0408">Iron</keyword>
<keyword id="KW-0472">Membrane</keyword>
<keyword id="KW-0479">Metal-binding</keyword>
<keyword id="KW-0735">Signal-anchor</keyword>
<keyword id="KW-0812">Transmembrane</keyword>
<keyword id="KW-1133">Transmembrane helix</keyword>
<evidence type="ECO:0000255" key="1">
    <source>
        <dbReference type="HAMAP-Rule" id="MF_01959"/>
    </source>
</evidence>
<evidence type="ECO:0000256" key="2">
    <source>
        <dbReference type="SAM" id="MobiDB-lite"/>
    </source>
</evidence>
<protein>
    <recommendedName>
        <fullName evidence="1">Cytochrome c-type biogenesis protein CcmE 2</fullName>
    </recommendedName>
    <alternativeName>
        <fullName evidence="1">Cytochrome c maturation protein E 2</fullName>
    </alternativeName>
    <alternativeName>
        <fullName evidence="1">Heme chaperone CcmE 2</fullName>
    </alternativeName>
</protein>
<name>CCME2_XANAC</name>
<gene>
    <name evidence="1" type="primary">ccmE2</name>
    <name evidence="1" type="synonym">cycJ2</name>
    <name type="ordered locus">XAC2327</name>
</gene>
<comment type="function">
    <text evidence="1">Heme chaperone required for the biogenesis of c-type cytochromes. Transiently binds heme delivered by CcmC and transfers the heme to apo-cytochromes in a process facilitated by CcmF and CcmH.</text>
</comment>
<comment type="subcellular location">
    <subcellularLocation>
        <location evidence="1">Cell inner membrane</location>
        <topology evidence="1">Single-pass type II membrane protein</topology>
        <orientation evidence="1">Periplasmic side</orientation>
    </subcellularLocation>
</comment>
<comment type="similarity">
    <text evidence="1">Belongs to the CcmE/CycJ family.</text>
</comment>
<feature type="chain" id="PRO_0000238880" description="Cytochrome c-type biogenesis protein CcmE 2">
    <location>
        <begin position="1"/>
        <end position="156"/>
    </location>
</feature>
<feature type="topological domain" description="Cytoplasmic" evidence="1">
    <location>
        <begin position="1"/>
        <end position="8"/>
    </location>
</feature>
<feature type="transmembrane region" description="Helical; Signal-anchor for type II membrane protein" evidence="1">
    <location>
        <begin position="9"/>
        <end position="29"/>
    </location>
</feature>
<feature type="topological domain" description="Periplasmic" evidence="1">
    <location>
        <begin position="30"/>
        <end position="156"/>
    </location>
</feature>
<feature type="region of interest" description="Disordered" evidence="2">
    <location>
        <begin position="136"/>
        <end position="156"/>
    </location>
</feature>
<feature type="binding site" description="covalent" evidence="1">
    <location>
        <position position="123"/>
    </location>
    <ligand>
        <name>heme</name>
        <dbReference type="ChEBI" id="CHEBI:30413"/>
    </ligand>
</feature>
<feature type="binding site" description="axial binding residue" evidence="1">
    <location>
        <position position="127"/>
    </location>
    <ligand>
        <name>heme</name>
        <dbReference type="ChEBI" id="CHEBI:30413"/>
    </ligand>
    <ligandPart>
        <name>Fe</name>
        <dbReference type="ChEBI" id="CHEBI:18248"/>
    </ligandPart>
</feature>
<accession>Q8PK49</accession>
<proteinExistence type="inferred from homology"/>
<reference key="1">
    <citation type="journal article" date="2002" name="Nature">
        <title>Comparison of the genomes of two Xanthomonas pathogens with differing host specificities.</title>
        <authorList>
            <person name="da Silva A.C.R."/>
            <person name="Ferro J.A."/>
            <person name="Reinach F.C."/>
            <person name="Farah C.S."/>
            <person name="Furlan L.R."/>
            <person name="Quaggio R.B."/>
            <person name="Monteiro-Vitorello C.B."/>
            <person name="Van Sluys M.A."/>
            <person name="Almeida N.F. Jr."/>
            <person name="Alves L.M.C."/>
            <person name="do Amaral A.M."/>
            <person name="Bertolini M.C."/>
            <person name="Camargo L.E.A."/>
            <person name="Camarotte G."/>
            <person name="Cannavan F."/>
            <person name="Cardozo J."/>
            <person name="Chambergo F."/>
            <person name="Ciapina L.P."/>
            <person name="Cicarelli R.M.B."/>
            <person name="Coutinho L.L."/>
            <person name="Cursino-Santos J.R."/>
            <person name="El-Dorry H."/>
            <person name="Faria J.B."/>
            <person name="Ferreira A.J.S."/>
            <person name="Ferreira R.C.C."/>
            <person name="Ferro M.I.T."/>
            <person name="Formighieri E.F."/>
            <person name="Franco M.C."/>
            <person name="Greggio C.C."/>
            <person name="Gruber A."/>
            <person name="Katsuyama A.M."/>
            <person name="Kishi L.T."/>
            <person name="Leite R.P."/>
            <person name="Lemos E.G.M."/>
            <person name="Lemos M.V.F."/>
            <person name="Locali E.C."/>
            <person name="Machado M.A."/>
            <person name="Madeira A.M.B.N."/>
            <person name="Martinez-Rossi N.M."/>
            <person name="Martins E.C."/>
            <person name="Meidanis J."/>
            <person name="Menck C.F.M."/>
            <person name="Miyaki C.Y."/>
            <person name="Moon D.H."/>
            <person name="Moreira L.M."/>
            <person name="Novo M.T.M."/>
            <person name="Okura V.K."/>
            <person name="Oliveira M.C."/>
            <person name="Oliveira V.R."/>
            <person name="Pereira H.A."/>
            <person name="Rossi A."/>
            <person name="Sena J.A.D."/>
            <person name="Silva C."/>
            <person name="de Souza R.F."/>
            <person name="Spinola L.A.F."/>
            <person name="Takita M.A."/>
            <person name="Tamura R.E."/>
            <person name="Teixeira E.C."/>
            <person name="Tezza R.I.D."/>
            <person name="Trindade dos Santos M."/>
            <person name="Truffi D."/>
            <person name="Tsai S.M."/>
            <person name="White F.F."/>
            <person name="Setubal J.C."/>
            <person name="Kitajima J.P."/>
        </authorList>
    </citation>
    <scope>NUCLEOTIDE SEQUENCE [LARGE SCALE GENOMIC DNA]</scope>
    <source>
        <strain>306</strain>
    </source>
</reference>
<organism>
    <name type="scientific">Xanthomonas axonopodis pv. citri (strain 306)</name>
    <dbReference type="NCBI Taxonomy" id="190486"/>
    <lineage>
        <taxon>Bacteria</taxon>
        <taxon>Pseudomonadati</taxon>
        <taxon>Pseudomonadota</taxon>
        <taxon>Gammaproteobacteria</taxon>
        <taxon>Lysobacterales</taxon>
        <taxon>Lysobacteraceae</taxon>
        <taxon>Xanthomonas</taxon>
    </lineage>
</organism>